<dbReference type="EMBL" id="DQ168468">
    <property type="protein sequence ID" value="ABB82464.1"/>
    <property type="molecule type" value="Genomic_DNA"/>
</dbReference>
<dbReference type="SMR" id="Q2N2J7"/>
<dbReference type="GO" id="GO:0005743">
    <property type="term" value="C:mitochondrial inner membrane"/>
    <property type="evidence" value="ECO:0007669"/>
    <property type="project" value="UniProtKB-SubCell"/>
</dbReference>
<dbReference type="GO" id="GO:0045275">
    <property type="term" value="C:respiratory chain complex III"/>
    <property type="evidence" value="ECO:0007669"/>
    <property type="project" value="InterPro"/>
</dbReference>
<dbReference type="GO" id="GO:0046872">
    <property type="term" value="F:metal ion binding"/>
    <property type="evidence" value="ECO:0007669"/>
    <property type="project" value="UniProtKB-KW"/>
</dbReference>
<dbReference type="GO" id="GO:0008121">
    <property type="term" value="F:ubiquinol-cytochrome-c reductase activity"/>
    <property type="evidence" value="ECO:0007669"/>
    <property type="project" value="InterPro"/>
</dbReference>
<dbReference type="GO" id="GO:0006122">
    <property type="term" value="P:mitochondrial electron transport, ubiquinol to cytochrome c"/>
    <property type="evidence" value="ECO:0007669"/>
    <property type="project" value="TreeGrafter"/>
</dbReference>
<dbReference type="CDD" id="cd00290">
    <property type="entry name" value="cytochrome_b_C"/>
    <property type="match status" value="1"/>
</dbReference>
<dbReference type="CDD" id="cd00284">
    <property type="entry name" value="Cytochrome_b_N"/>
    <property type="match status" value="1"/>
</dbReference>
<dbReference type="FunFam" id="1.20.810.10:FF:000002">
    <property type="entry name" value="Cytochrome b"/>
    <property type="match status" value="1"/>
</dbReference>
<dbReference type="Gene3D" id="1.20.810.10">
    <property type="entry name" value="Cytochrome Bc1 Complex, Chain C"/>
    <property type="match status" value="1"/>
</dbReference>
<dbReference type="InterPro" id="IPR005798">
    <property type="entry name" value="Cyt_b/b6_C"/>
</dbReference>
<dbReference type="InterPro" id="IPR036150">
    <property type="entry name" value="Cyt_b/b6_C_sf"/>
</dbReference>
<dbReference type="InterPro" id="IPR005797">
    <property type="entry name" value="Cyt_b/b6_N"/>
</dbReference>
<dbReference type="InterPro" id="IPR027387">
    <property type="entry name" value="Cytb/b6-like_sf"/>
</dbReference>
<dbReference type="InterPro" id="IPR030689">
    <property type="entry name" value="Cytochrome_b"/>
</dbReference>
<dbReference type="InterPro" id="IPR048260">
    <property type="entry name" value="Cytochrome_b_C_euk/bac"/>
</dbReference>
<dbReference type="InterPro" id="IPR048259">
    <property type="entry name" value="Cytochrome_b_N_euk/bac"/>
</dbReference>
<dbReference type="InterPro" id="IPR016174">
    <property type="entry name" value="Di-haem_cyt_TM"/>
</dbReference>
<dbReference type="PANTHER" id="PTHR19271">
    <property type="entry name" value="CYTOCHROME B"/>
    <property type="match status" value="1"/>
</dbReference>
<dbReference type="PANTHER" id="PTHR19271:SF16">
    <property type="entry name" value="CYTOCHROME B"/>
    <property type="match status" value="1"/>
</dbReference>
<dbReference type="Pfam" id="PF00032">
    <property type="entry name" value="Cytochrom_B_C"/>
    <property type="match status" value="1"/>
</dbReference>
<dbReference type="Pfam" id="PF00033">
    <property type="entry name" value="Cytochrome_B"/>
    <property type="match status" value="1"/>
</dbReference>
<dbReference type="PIRSF" id="PIRSF038885">
    <property type="entry name" value="COB"/>
    <property type="match status" value="1"/>
</dbReference>
<dbReference type="SUPFAM" id="SSF81648">
    <property type="entry name" value="a domain/subunit of cytochrome bc1 complex (Ubiquinol-cytochrome c reductase)"/>
    <property type="match status" value="1"/>
</dbReference>
<dbReference type="SUPFAM" id="SSF81342">
    <property type="entry name" value="Transmembrane di-heme cytochromes"/>
    <property type="match status" value="1"/>
</dbReference>
<dbReference type="PROSITE" id="PS51003">
    <property type="entry name" value="CYTB_CTER"/>
    <property type="match status" value="1"/>
</dbReference>
<dbReference type="PROSITE" id="PS51002">
    <property type="entry name" value="CYTB_NTER"/>
    <property type="match status" value="1"/>
</dbReference>
<keyword id="KW-0249">Electron transport</keyword>
<keyword id="KW-0349">Heme</keyword>
<keyword id="KW-0408">Iron</keyword>
<keyword id="KW-0472">Membrane</keyword>
<keyword id="KW-0479">Metal-binding</keyword>
<keyword id="KW-0496">Mitochondrion</keyword>
<keyword id="KW-0999">Mitochondrion inner membrane</keyword>
<keyword id="KW-0679">Respiratory chain</keyword>
<keyword id="KW-0812">Transmembrane</keyword>
<keyword id="KW-1133">Transmembrane helix</keyword>
<keyword id="KW-0813">Transport</keyword>
<keyword id="KW-0830">Ubiquinone</keyword>
<geneLocation type="mitochondrion"/>
<comment type="function">
    <text evidence="2">Component of the ubiquinol-cytochrome c reductase complex (complex III or cytochrome b-c1 complex) that is part of the mitochondrial respiratory chain. The b-c1 complex mediates electron transfer from ubiquinol to cytochrome c. Contributes to the generation of a proton gradient across the mitochondrial membrane that is then used for ATP synthesis.</text>
</comment>
<comment type="cofactor">
    <cofactor evidence="2">
        <name>heme b</name>
        <dbReference type="ChEBI" id="CHEBI:60344"/>
    </cofactor>
    <text evidence="2">Binds 2 heme b groups non-covalently.</text>
</comment>
<comment type="subunit">
    <text evidence="2">The cytochrome bc1 complex contains 11 subunits: 3 respiratory subunits (MT-CYB, CYC1 and UQCRFS1), 2 core proteins (UQCRC1 and UQCRC2) and 6 low-molecular weight proteins (UQCRH/QCR6, UQCRB/QCR7, UQCRQ/QCR8, UQCR10/QCR9, UQCR11/QCR10 and a cleavage product of UQCRFS1). This cytochrome bc1 complex then forms a dimer.</text>
</comment>
<comment type="subcellular location">
    <subcellularLocation>
        <location evidence="2">Mitochondrion inner membrane</location>
        <topology evidence="2">Multi-pass membrane protein</topology>
    </subcellularLocation>
</comment>
<comment type="miscellaneous">
    <text evidence="1">Heme 1 (or BL or b562) is low-potential and absorbs at about 562 nm, and heme 2 (or BH or b566) is high-potential and absorbs at about 566 nm.</text>
</comment>
<comment type="similarity">
    <text evidence="3 4">Belongs to the cytochrome b family.</text>
</comment>
<comment type="caution">
    <text evidence="2">The full-length protein contains only eight transmembrane helices, not nine as predicted by bioinformatics tools.</text>
</comment>
<protein>
    <recommendedName>
        <fullName>Cytochrome b</fullName>
    </recommendedName>
    <alternativeName>
        <fullName>Complex III subunit 3</fullName>
    </alternativeName>
    <alternativeName>
        <fullName>Complex III subunit III</fullName>
    </alternativeName>
    <alternativeName>
        <fullName>Cytochrome b-c1 complex subunit 3</fullName>
    </alternativeName>
    <alternativeName>
        <fullName>Ubiquinol-cytochrome-c reductase complex cytochrome b subunit</fullName>
    </alternativeName>
</protein>
<name>CYB_HETAO</name>
<sequence>MMIMRKTHPLAKMINHAFIDLPAPANISGWWNFGSLIGMCLIIQIATGLFLAMHYTADTLTAFSSVTHICRDVNYGWLIRNMHANGASLFFICLYLHIGRGIYYGSYLYKETWNVGILLLFTVMATAFMGYVLPWGQMSFWGATVITNLLSAIPYIGPDLVEWIWGGFSVDKATLTRFFAFHFILPFIVAALAMVHLLFLHETGSNNPLGIPSNCDKIPFHPYYTFKDLLGVMIVLTLYLSIVLFFPDILGDPDNYTPANPLNTPPHIKPEWYFLFAYAILRSIPNKLGGVIALVLSILVLALFPLLHTSNQRSMTFRPISQFLFWVLVSDLFILTWIGGQPVEPPFILIGQVASILYFLIILVLFPIAGLIENKILKW</sequence>
<proteinExistence type="inferred from homology"/>
<accession>Q2N2J7</accession>
<evidence type="ECO:0000250" key="1"/>
<evidence type="ECO:0000250" key="2">
    <source>
        <dbReference type="UniProtKB" id="P00157"/>
    </source>
</evidence>
<evidence type="ECO:0000255" key="3">
    <source>
        <dbReference type="PROSITE-ProRule" id="PRU00967"/>
    </source>
</evidence>
<evidence type="ECO:0000255" key="4">
    <source>
        <dbReference type="PROSITE-ProRule" id="PRU00968"/>
    </source>
</evidence>
<organism>
    <name type="scientific">Heteromys anomalus</name>
    <name type="common">Caribbean spiny pocket mouse</name>
    <dbReference type="NCBI Taxonomy" id="348153"/>
    <lineage>
        <taxon>Eukaryota</taxon>
        <taxon>Metazoa</taxon>
        <taxon>Chordata</taxon>
        <taxon>Craniata</taxon>
        <taxon>Vertebrata</taxon>
        <taxon>Euteleostomi</taxon>
        <taxon>Mammalia</taxon>
        <taxon>Eutheria</taxon>
        <taxon>Euarchontoglires</taxon>
        <taxon>Glires</taxon>
        <taxon>Rodentia</taxon>
        <taxon>Castorimorpha</taxon>
        <taxon>Heteromyidae</taxon>
        <taxon>Heteromyinae</taxon>
        <taxon>Heteromys</taxon>
    </lineage>
</organism>
<reference key="1">
    <citation type="journal article" date="2005" name="J. Mammal.">
        <title>Phylogenetics of spiny pocket mice (genus Liomys): analysis of cytochrome b based on multiple heuristic approaches.</title>
        <authorList>
            <person name="Rogers D.S."/>
            <person name="Vance V.L."/>
        </authorList>
    </citation>
    <scope>NUCLEOTIDE SEQUENCE [GENOMIC DNA]</scope>
</reference>
<feature type="chain" id="PRO_0000255059" description="Cytochrome b">
    <location>
        <begin position="1"/>
        <end position="379"/>
    </location>
</feature>
<feature type="transmembrane region" description="Helical" evidence="2">
    <location>
        <begin position="33"/>
        <end position="53"/>
    </location>
</feature>
<feature type="transmembrane region" description="Helical" evidence="2">
    <location>
        <begin position="77"/>
        <end position="98"/>
    </location>
</feature>
<feature type="transmembrane region" description="Helical" evidence="2">
    <location>
        <begin position="113"/>
        <end position="133"/>
    </location>
</feature>
<feature type="transmembrane region" description="Helical" evidence="2">
    <location>
        <begin position="178"/>
        <end position="198"/>
    </location>
</feature>
<feature type="transmembrane region" description="Helical" evidence="2">
    <location>
        <begin position="226"/>
        <end position="246"/>
    </location>
</feature>
<feature type="transmembrane region" description="Helical" evidence="2">
    <location>
        <begin position="288"/>
        <end position="308"/>
    </location>
</feature>
<feature type="transmembrane region" description="Helical" evidence="2">
    <location>
        <begin position="320"/>
        <end position="340"/>
    </location>
</feature>
<feature type="transmembrane region" description="Helical" evidence="2">
    <location>
        <begin position="347"/>
        <end position="367"/>
    </location>
</feature>
<feature type="binding site" description="axial binding residue" evidence="2">
    <location>
        <position position="83"/>
    </location>
    <ligand>
        <name>heme b</name>
        <dbReference type="ChEBI" id="CHEBI:60344"/>
        <label>b562</label>
    </ligand>
    <ligandPart>
        <name>Fe</name>
        <dbReference type="ChEBI" id="CHEBI:18248"/>
    </ligandPart>
</feature>
<feature type="binding site" description="axial binding residue" evidence="2">
    <location>
        <position position="97"/>
    </location>
    <ligand>
        <name>heme b</name>
        <dbReference type="ChEBI" id="CHEBI:60344"/>
        <label>b566</label>
    </ligand>
    <ligandPart>
        <name>Fe</name>
        <dbReference type="ChEBI" id="CHEBI:18248"/>
    </ligandPart>
</feature>
<feature type="binding site" description="axial binding residue" evidence="2">
    <location>
        <position position="182"/>
    </location>
    <ligand>
        <name>heme b</name>
        <dbReference type="ChEBI" id="CHEBI:60344"/>
        <label>b562</label>
    </ligand>
    <ligandPart>
        <name>Fe</name>
        <dbReference type="ChEBI" id="CHEBI:18248"/>
    </ligandPart>
</feature>
<feature type="binding site" description="axial binding residue" evidence="2">
    <location>
        <position position="196"/>
    </location>
    <ligand>
        <name>heme b</name>
        <dbReference type="ChEBI" id="CHEBI:60344"/>
        <label>b566</label>
    </ligand>
    <ligandPart>
        <name>Fe</name>
        <dbReference type="ChEBI" id="CHEBI:18248"/>
    </ligandPart>
</feature>
<feature type="binding site" evidence="2">
    <location>
        <position position="201"/>
    </location>
    <ligand>
        <name>a ubiquinone</name>
        <dbReference type="ChEBI" id="CHEBI:16389"/>
    </ligand>
</feature>
<gene>
    <name type="primary">MT-CYB</name>
    <name type="synonym">COB</name>
    <name type="synonym">CYTB</name>
    <name type="synonym">MTCYB</name>
</gene>